<comment type="function">
    <text>Tubulin is the major constituent of microtubules, a cylinder consisting of laterally associated linear protofilaments composed of alpha- and beta-tubulin heterodimers. Microtubules grow by the addition of GTP-tubulin dimers to the microtubule end, where a stabilizing cap forms. Below the cap, tubulin dimers are in GDP-bound state, owing to GTPase activity of alpha-tubulin.</text>
</comment>
<comment type="cofactor">
    <cofactor evidence="3">
        <name>Mg(2+)</name>
        <dbReference type="ChEBI" id="CHEBI:18420"/>
    </cofactor>
</comment>
<comment type="subunit">
    <text>Dimer of alpha and beta chains. A typical microtubule is a hollow water-filled tube with an outer diameter of 25 nm and an inner diameter of 15 nM. Alpha-beta heterodimers associate head-to-tail to form protofilaments running lengthwise along the microtubule wall with the beta-tubulin subunit facing the microtubule plus end conferring a structural polarity. Microtubules usually have 13 protofilaments but different protofilament numbers can be found in some organisms and specialized cells.</text>
</comment>
<comment type="subcellular location">
    <subcellularLocation>
        <location>Cytoplasm</location>
        <location>Cytoskeleton</location>
    </subcellularLocation>
</comment>
<comment type="domain">
    <text>The highly acidic C-terminal region may bind cations such as calcium.</text>
</comment>
<comment type="domain">
    <text evidence="2">The MREI motif is common among all beta-tubulin isoforms and may be critical for tubulin autoregulation.</text>
</comment>
<comment type="PTM">
    <text evidence="7">Some glutamate residues at the C-terminus are polyglycylated, resulting in polyglycine chains on the gamma-carboxyl group. Glycylation is mainly limited to tubulin incorporated into axonemes (cilia and flagella) whereas glutamylation is prevalent in neuronal cells, centrioles, axonemes, and the mitotic spindle. Both modifications can coexist on the same protein on adjacent residues, and lowering polyglycylation levels increases polyglutamylation, and reciprocally. Cilia and flagella glycylation is required for their stability and maintenance. Flagella glycylation controls sperm motility.</text>
</comment>
<comment type="PTM">
    <text evidence="6 7">Some glutamate residues at the C-terminus are polyglutamylated, resulting in polyglutamate chains on the gamma-carboxyl group (By similarity). Polyglutamylation plays a key role in microtubule severing by spastin (SPAST). SPAST preferentially recognizes and acts on microtubules decorated with short polyglutamate tails: severing activity by SPAST increases as the number of glutamates per tubulin rises from one to eight, but decreases beyond this glutamylation threshold (By similarity). Glutamylation is also involved in cilia motility (By similarity).</text>
</comment>
<comment type="PTM">
    <text evidence="1">Phosphorylated on Ser-172 by CDK1 during the cell cycle, from metaphase to telophase, but not in interphase. This phosphorylation inhibits tubulin incorporation into microtubules.</text>
</comment>
<comment type="similarity">
    <text evidence="8">Belongs to the tubulin family.</text>
</comment>
<accession>Q4R4X8</accession>
<organism>
    <name type="scientific">Macaca fascicularis</name>
    <name type="common">Crab-eating macaque</name>
    <name type="synonym">Cynomolgus monkey</name>
    <dbReference type="NCBI Taxonomy" id="9541"/>
    <lineage>
        <taxon>Eukaryota</taxon>
        <taxon>Metazoa</taxon>
        <taxon>Chordata</taxon>
        <taxon>Craniata</taxon>
        <taxon>Vertebrata</taxon>
        <taxon>Euteleostomi</taxon>
        <taxon>Mammalia</taxon>
        <taxon>Eutheria</taxon>
        <taxon>Euarchontoglires</taxon>
        <taxon>Primates</taxon>
        <taxon>Haplorrhini</taxon>
        <taxon>Catarrhini</taxon>
        <taxon>Cercopithecidae</taxon>
        <taxon>Cercopithecinae</taxon>
        <taxon>Macaca</taxon>
    </lineage>
</organism>
<proteinExistence type="evidence at transcript level"/>
<protein>
    <recommendedName>
        <fullName>Tubulin beta-4A chain</fullName>
    </recommendedName>
    <alternativeName>
        <fullName>Tubulin beta-4 chain</fullName>
    </alternativeName>
</protein>
<reference key="1">
    <citation type="submission" date="2005-06" db="EMBL/GenBank/DDBJ databases">
        <title>DNA sequences of macaque genes expressed in brain or testis and its evolutionary implications.</title>
        <authorList>
            <consortium name="International consortium for macaque cDNA sequencing and analysis"/>
        </authorList>
    </citation>
    <scope>NUCLEOTIDE SEQUENCE [LARGE SCALE MRNA]</scope>
    <source>
        <tissue>Temporal cortex</tissue>
    </source>
</reference>
<name>TBB4A_MACFA</name>
<sequence length="444" mass="49586">MREIVHLQAGQCGNQIGAKFWEVISDEHGIDPTGTYHGDSDLQLERINVYYNEATGGNYVPRAVLVDLEPGTMDSVRSGPFGQIFRPDNFVFGQSGAGNNWAKGHYTEGAELVDAVLDVVRKEAESCDCLQGFQLTHSLGGGTGSGMGTLLISKIREEFPDRIMNTFSVVPSPKVSDTVVEPYNATLSVHQLVENTDETYCIDNEALYDICFRTLKLTTPTYGDLNHLVSATMSGVTTCLRFPGQLNADLRKLAVNMVPFPRLHFFMPGFAPLTSRGSQQYRALTVPELTQQMFDAKNMMAACDPRHGRYLTVAAVFRGRMSMKEVDEQMLSVQSKNSSYFVEWIPNNVKTAVCDIPPRGLKMAATFIGNSTAIQELFKRISEQFTAMFRRKAFLHWYTGEGMDEMEFTEAESNMNDLVSEYQQYQDATAEEGEFEEEAEEEVA</sequence>
<evidence type="ECO:0000250" key="1">
    <source>
        <dbReference type="UniProtKB" id="P04350"/>
    </source>
</evidence>
<evidence type="ECO:0000250" key="2">
    <source>
        <dbReference type="UniProtKB" id="P07437"/>
    </source>
</evidence>
<evidence type="ECO:0000250" key="3">
    <source>
        <dbReference type="UniProtKB" id="P68363"/>
    </source>
</evidence>
<evidence type="ECO:0000250" key="4">
    <source>
        <dbReference type="UniProtKB" id="Q13509"/>
    </source>
</evidence>
<evidence type="ECO:0000250" key="5">
    <source>
        <dbReference type="UniProtKB" id="Q2T9S0"/>
    </source>
</evidence>
<evidence type="ECO:0000250" key="6">
    <source>
        <dbReference type="UniProtKB" id="Q71U36"/>
    </source>
</evidence>
<evidence type="ECO:0000250" key="7">
    <source>
        <dbReference type="UniProtKB" id="Q9D6F9"/>
    </source>
</evidence>
<evidence type="ECO:0000305" key="8"/>
<keyword id="KW-0963">Cytoplasm</keyword>
<keyword id="KW-0206">Cytoskeleton</keyword>
<keyword id="KW-0342">GTP-binding</keyword>
<keyword id="KW-1017">Isopeptide bond</keyword>
<keyword id="KW-0460">Magnesium</keyword>
<keyword id="KW-0479">Metal-binding</keyword>
<keyword id="KW-0493">Microtubule</keyword>
<keyword id="KW-0547">Nucleotide-binding</keyword>
<keyword id="KW-0597">Phosphoprotein</keyword>
<keyword id="KW-1185">Reference proteome</keyword>
<dbReference type="EMBL" id="AB169766">
    <property type="protein sequence ID" value="BAE01847.1"/>
    <property type="molecule type" value="mRNA"/>
</dbReference>
<dbReference type="RefSeq" id="NP_001271111.1">
    <property type="nucleotide sequence ID" value="NM_001284182.1"/>
</dbReference>
<dbReference type="RefSeq" id="XP_045236132.1">
    <property type="nucleotide sequence ID" value="XM_045380197.2"/>
</dbReference>
<dbReference type="SMR" id="Q4R4X8"/>
<dbReference type="STRING" id="9541.ENSMFAP00000012303"/>
<dbReference type="Ensembl" id="ENSMFAT00000096397.1">
    <property type="protein sequence ID" value="ENSMFAP00000053066.1"/>
    <property type="gene ID" value="ENSMFAG00000059050.1"/>
</dbReference>
<dbReference type="GeneID" id="102129286"/>
<dbReference type="eggNOG" id="KOG1375">
    <property type="taxonomic scope" value="Eukaryota"/>
</dbReference>
<dbReference type="GeneTree" id="ENSGT00940000161972"/>
<dbReference type="Proteomes" id="UP000233100">
    <property type="component" value="Chromosome 19"/>
</dbReference>
<dbReference type="GO" id="GO:0005930">
    <property type="term" value="C:axoneme"/>
    <property type="evidence" value="ECO:0007669"/>
    <property type="project" value="Ensembl"/>
</dbReference>
<dbReference type="GO" id="GO:0045171">
    <property type="term" value="C:intercellular bridge"/>
    <property type="evidence" value="ECO:0007669"/>
    <property type="project" value="Ensembl"/>
</dbReference>
<dbReference type="GO" id="GO:0033269">
    <property type="term" value="C:internode region of axon"/>
    <property type="evidence" value="ECO:0007669"/>
    <property type="project" value="Ensembl"/>
</dbReference>
<dbReference type="GO" id="GO:0005874">
    <property type="term" value="C:microtubule"/>
    <property type="evidence" value="ECO:0007669"/>
    <property type="project" value="UniProtKB-KW"/>
</dbReference>
<dbReference type="GO" id="GO:0072686">
    <property type="term" value="C:mitotic spindle"/>
    <property type="evidence" value="ECO:0007669"/>
    <property type="project" value="Ensembl"/>
</dbReference>
<dbReference type="GO" id="GO:0043209">
    <property type="term" value="C:myelin sheath"/>
    <property type="evidence" value="ECO:0007669"/>
    <property type="project" value="Ensembl"/>
</dbReference>
<dbReference type="GO" id="GO:0043025">
    <property type="term" value="C:neuronal cell body"/>
    <property type="evidence" value="ECO:0007669"/>
    <property type="project" value="Ensembl"/>
</dbReference>
<dbReference type="GO" id="GO:0005509">
    <property type="term" value="F:calcium ion binding"/>
    <property type="evidence" value="ECO:0007669"/>
    <property type="project" value="Ensembl"/>
</dbReference>
<dbReference type="GO" id="GO:0005525">
    <property type="term" value="F:GTP binding"/>
    <property type="evidence" value="ECO:0007669"/>
    <property type="project" value="UniProtKB-KW"/>
</dbReference>
<dbReference type="GO" id="GO:0003924">
    <property type="term" value="F:GTPase activity"/>
    <property type="evidence" value="ECO:0007669"/>
    <property type="project" value="InterPro"/>
</dbReference>
<dbReference type="GO" id="GO:0005200">
    <property type="term" value="F:structural constituent of cytoskeleton"/>
    <property type="evidence" value="ECO:0007669"/>
    <property type="project" value="InterPro"/>
</dbReference>
<dbReference type="GO" id="GO:0007017">
    <property type="term" value="P:microtubule-based process"/>
    <property type="evidence" value="ECO:0007669"/>
    <property type="project" value="InterPro"/>
</dbReference>
<dbReference type="GO" id="GO:0031115">
    <property type="term" value="P:negative regulation of microtubule polymerization"/>
    <property type="evidence" value="ECO:0007669"/>
    <property type="project" value="Ensembl"/>
</dbReference>
<dbReference type="CDD" id="cd02187">
    <property type="entry name" value="beta_tubulin"/>
    <property type="match status" value="1"/>
</dbReference>
<dbReference type="FunFam" id="1.10.287.600:FF:000002">
    <property type="entry name" value="Tubulin beta chain"/>
    <property type="match status" value="1"/>
</dbReference>
<dbReference type="FunFam" id="3.30.1330.20:FF:000002">
    <property type="entry name" value="Tubulin beta chain"/>
    <property type="match status" value="1"/>
</dbReference>
<dbReference type="FunFam" id="3.40.50.1440:FF:000003">
    <property type="entry name" value="Tubulin beta chain"/>
    <property type="match status" value="1"/>
</dbReference>
<dbReference type="Gene3D" id="1.10.287.600">
    <property type="entry name" value="Helix hairpin bin"/>
    <property type="match status" value="1"/>
</dbReference>
<dbReference type="Gene3D" id="3.30.1330.20">
    <property type="entry name" value="Tubulin/FtsZ, C-terminal domain"/>
    <property type="match status" value="1"/>
</dbReference>
<dbReference type="Gene3D" id="3.40.50.1440">
    <property type="entry name" value="Tubulin/FtsZ, GTPase domain"/>
    <property type="match status" value="1"/>
</dbReference>
<dbReference type="InterPro" id="IPR013838">
    <property type="entry name" value="Beta-tubulin_BS"/>
</dbReference>
<dbReference type="InterPro" id="IPR002453">
    <property type="entry name" value="Beta_tubulin"/>
</dbReference>
<dbReference type="InterPro" id="IPR008280">
    <property type="entry name" value="Tub_FtsZ_C"/>
</dbReference>
<dbReference type="InterPro" id="IPR000217">
    <property type="entry name" value="Tubulin"/>
</dbReference>
<dbReference type="InterPro" id="IPR037103">
    <property type="entry name" value="Tubulin/FtsZ-like_C"/>
</dbReference>
<dbReference type="InterPro" id="IPR018316">
    <property type="entry name" value="Tubulin/FtsZ_2-layer-sand-dom"/>
</dbReference>
<dbReference type="InterPro" id="IPR036525">
    <property type="entry name" value="Tubulin/FtsZ_GTPase_sf"/>
</dbReference>
<dbReference type="InterPro" id="IPR023123">
    <property type="entry name" value="Tubulin_C"/>
</dbReference>
<dbReference type="InterPro" id="IPR017975">
    <property type="entry name" value="Tubulin_CS"/>
</dbReference>
<dbReference type="InterPro" id="IPR003008">
    <property type="entry name" value="Tubulin_FtsZ_GTPase"/>
</dbReference>
<dbReference type="PANTHER" id="PTHR11588">
    <property type="entry name" value="TUBULIN"/>
    <property type="match status" value="1"/>
</dbReference>
<dbReference type="Pfam" id="PF00091">
    <property type="entry name" value="Tubulin"/>
    <property type="match status" value="1"/>
</dbReference>
<dbReference type="Pfam" id="PF03953">
    <property type="entry name" value="Tubulin_C"/>
    <property type="match status" value="1"/>
</dbReference>
<dbReference type="PRINTS" id="PR01163">
    <property type="entry name" value="BETATUBULIN"/>
</dbReference>
<dbReference type="PRINTS" id="PR01161">
    <property type="entry name" value="TUBULIN"/>
</dbReference>
<dbReference type="SMART" id="SM00864">
    <property type="entry name" value="Tubulin"/>
    <property type="match status" value="1"/>
</dbReference>
<dbReference type="SMART" id="SM00865">
    <property type="entry name" value="Tubulin_C"/>
    <property type="match status" value="1"/>
</dbReference>
<dbReference type="SUPFAM" id="SSF55307">
    <property type="entry name" value="Tubulin C-terminal domain-like"/>
    <property type="match status" value="1"/>
</dbReference>
<dbReference type="SUPFAM" id="SSF52490">
    <property type="entry name" value="Tubulin nucleotide-binding domain-like"/>
    <property type="match status" value="1"/>
</dbReference>
<dbReference type="PROSITE" id="PS00227">
    <property type="entry name" value="TUBULIN"/>
    <property type="match status" value="1"/>
</dbReference>
<dbReference type="PROSITE" id="PS00228">
    <property type="entry name" value="TUBULIN_B_AUTOREG"/>
    <property type="match status" value="1"/>
</dbReference>
<feature type="chain" id="PRO_0000233026" description="Tubulin beta-4A chain">
    <location>
        <begin position="1"/>
        <end position="444"/>
    </location>
</feature>
<feature type="short sequence motif" description="MREI motif" evidence="2">
    <location>
        <begin position="1"/>
        <end position="4"/>
    </location>
</feature>
<feature type="binding site" evidence="4">
    <location>
        <position position="11"/>
    </location>
    <ligand>
        <name>GTP</name>
        <dbReference type="ChEBI" id="CHEBI:37565"/>
    </ligand>
</feature>
<feature type="binding site" evidence="3">
    <location>
        <position position="69"/>
    </location>
    <ligand>
        <name>GTP</name>
        <dbReference type="ChEBI" id="CHEBI:37565"/>
    </ligand>
</feature>
<feature type="binding site" evidence="3">
    <location>
        <position position="69"/>
    </location>
    <ligand>
        <name>Mg(2+)</name>
        <dbReference type="ChEBI" id="CHEBI:18420"/>
    </ligand>
</feature>
<feature type="binding site" evidence="4">
    <location>
        <position position="138"/>
    </location>
    <ligand>
        <name>GTP</name>
        <dbReference type="ChEBI" id="CHEBI:37565"/>
    </ligand>
</feature>
<feature type="binding site" evidence="4">
    <location>
        <position position="142"/>
    </location>
    <ligand>
        <name>GTP</name>
        <dbReference type="ChEBI" id="CHEBI:37565"/>
    </ligand>
</feature>
<feature type="binding site" evidence="4">
    <location>
        <position position="143"/>
    </location>
    <ligand>
        <name>GTP</name>
        <dbReference type="ChEBI" id="CHEBI:37565"/>
    </ligand>
</feature>
<feature type="binding site" evidence="4">
    <location>
        <position position="144"/>
    </location>
    <ligand>
        <name>GTP</name>
        <dbReference type="ChEBI" id="CHEBI:37565"/>
    </ligand>
</feature>
<feature type="binding site" evidence="4">
    <location>
        <position position="204"/>
    </location>
    <ligand>
        <name>GTP</name>
        <dbReference type="ChEBI" id="CHEBI:37565"/>
    </ligand>
</feature>
<feature type="binding site" evidence="4">
    <location>
        <position position="226"/>
    </location>
    <ligand>
        <name>GTP</name>
        <dbReference type="ChEBI" id="CHEBI:37565"/>
    </ligand>
</feature>
<feature type="modified residue" description="Phosphoserine; by CDK1" evidence="1">
    <location>
        <position position="172"/>
    </location>
</feature>
<feature type="modified residue" description="5-glutamyl polyglutamate" evidence="5">
    <location>
        <position position="436"/>
    </location>
</feature>
<gene>
    <name type="primary">TUBB4A</name>
    <name type="synonym">TUBB4</name>
    <name type="ORF">QtrA-11757</name>
</gene>